<name>TXM15_MACGS</name>
<comment type="function">
    <text evidence="1">Intrathorax injection into crickets causes paralysis prolonged for more than 60 minutes, followed by recovery.</text>
</comment>
<comment type="subcellular location">
    <subcellularLocation>
        <location>Secreted</location>
    </subcellularLocation>
</comment>
<comment type="tissue specificity">
    <text>Expressed by the venom gland.</text>
</comment>
<comment type="PTM">
    <text evidence="2">Contains 4 disulfide bonds.</text>
</comment>
<comment type="mass spectrometry" mass="6942.8" method="MALDI" evidence="1"/>
<comment type="similarity">
    <text>Belongs to the neurotoxin 25 family. F7 subfamily.</text>
</comment>
<reference key="1">
    <citation type="journal article" date="2004" name="Toxicon">
        <title>Rapid and efficient identification of cysteine-rich peptides by random screening of a venom gland cDNA library from the hexathelid spider Macrothele gigas.</title>
        <authorList>
            <person name="Satake H."/>
            <person name="Villegas E."/>
            <person name="Oshiro N."/>
            <person name="Terada K."/>
            <person name="Shinada T."/>
            <person name="Corzo G."/>
        </authorList>
    </citation>
    <scope>NUCLEOTIDE SEQUENCE [MRNA]</scope>
    <scope>FUNCTION</scope>
    <scope>MASS SPECTROMETRY</scope>
    <source>
        <tissue>Venom</tissue>
        <tissue>Venom gland</tissue>
    </source>
</reference>
<sequence length="65" mass="6951">ECSKQLGESCKCNKQCCGATVICGTIYVGGKEENLCIEKTSNNAILNFFGKIAHVVENGLSFSCD</sequence>
<feature type="chain" id="PRO_0000285715" description="U15-hexatoxin-Mg1a">
    <location>
        <begin position="1"/>
        <end position="65"/>
    </location>
</feature>
<proteinExistence type="evidence at protein level"/>
<organism>
    <name type="scientific">Macrothele gigas</name>
    <name type="common">Japanese funnel web spider</name>
    <dbReference type="NCBI Taxonomy" id="223896"/>
    <lineage>
        <taxon>Eukaryota</taxon>
        <taxon>Metazoa</taxon>
        <taxon>Ecdysozoa</taxon>
        <taxon>Arthropoda</taxon>
        <taxon>Chelicerata</taxon>
        <taxon>Arachnida</taxon>
        <taxon>Araneae</taxon>
        <taxon>Mygalomorphae</taxon>
        <taxon>Macrothelidae</taxon>
        <taxon>Macrothele</taxon>
    </lineage>
</organism>
<protein>
    <recommendedName>
        <fullName>U15-hexatoxin-Mg1a</fullName>
        <shortName>U15-HXTX-Mg1a</shortName>
    </recommendedName>
    <alternativeName>
        <fullName>Neurotoxin magi-15</fullName>
    </alternativeName>
</protein>
<evidence type="ECO:0000269" key="1">
    <source>
    </source>
</evidence>
<evidence type="ECO:0000305" key="2"/>
<dbReference type="ArachnoServer" id="AS000368">
    <property type="toxin name" value="U15-hexatoxin-Mg1a"/>
</dbReference>
<dbReference type="GO" id="GO:0005576">
    <property type="term" value="C:extracellular region"/>
    <property type="evidence" value="ECO:0007669"/>
    <property type="project" value="UniProtKB-SubCell"/>
</dbReference>
<dbReference type="GO" id="GO:0090729">
    <property type="term" value="F:toxin activity"/>
    <property type="evidence" value="ECO:0007669"/>
    <property type="project" value="UniProtKB-KW"/>
</dbReference>
<keyword id="KW-1015">Disulfide bond</keyword>
<keyword id="KW-0528">Neurotoxin</keyword>
<keyword id="KW-0964">Secreted</keyword>
<keyword id="KW-0800">Toxin</keyword>
<accession>P0C2V1</accession>